<dbReference type="EC" id="3.5.1.18" evidence="1"/>
<dbReference type="EMBL" id="CP000848">
    <property type="protein sequence ID" value="ABV76919.1"/>
    <property type="molecule type" value="Genomic_DNA"/>
</dbReference>
<dbReference type="RefSeq" id="WP_012151455.1">
    <property type="nucleotide sequence ID" value="NZ_CP121767.1"/>
</dbReference>
<dbReference type="SMR" id="A8GU44"/>
<dbReference type="GeneID" id="79937946"/>
<dbReference type="KEGG" id="rri:A1G_07400"/>
<dbReference type="HOGENOM" id="CLU_021802_4_0_5"/>
<dbReference type="UniPathway" id="UPA00034">
    <property type="reaction ID" value="UER00021"/>
</dbReference>
<dbReference type="Proteomes" id="UP000006832">
    <property type="component" value="Chromosome"/>
</dbReference>
<dbReference type="GO" id="GO:0008777">
    <property type="term" value="F:acetylornithine deacetylase activity"/>
    <property type="evidence" value="ECO:0007669"/>
    <property type="project" value="TreeGrafter"/>
</dbReference>
<dbReference type="GO" id="GO:0050897">
    <property type="term" value="F:cobalt ion binding"/>
    <property type="evidence" value="ECO:0007669"/>
    <property type="project" value="UniProtKB-UniRule"/>
</dbReference>
<dbReference type="GO" id="GO:0009014">
    <property type="term" value="F:succinyl-diaminopimelate desuccinylase activity"/>
    <property type="evidence" value="ECO:0007669"/>
    <property type="project" value="UniProtKB-UniRule"/>
</dbReference>
<dbReference type="GO" id="GO:0008270">
    <property type="term" value="F:zinc ion binding"/>
    <property type="evidence" value="ECO:0007669"/>
    <property type="project" value="UniProtKB-UniRule"/>
</dbReference>
<dbReference type="GO" id="GO:0019877">
    <property type="term" value="P:diaminopimelate biosynthetic process"/>
    <property type="evidence" value="ECO:0007669"/>
    <property type="project" value="UniProtKB-UniRule"/>
</dbReference>
<dbReference type="GO" id="GO:0006526">
    <property type="term" value="P:L-arginine biosynthetic process"/>
    <property type="evidence" value="ECO:0007669"/>
    <property type="project" value="TreeGrafter"/>
</dbReference>
<dbReference type="GO" id="GO:0009089">
    <property type="term" value="P:lysine biosynthetic process via diaminopimelate"/>
    <property type="evidence" value="ECO:0007669"/>
    <property type="project" value="UniProtKB-UniRule"/>
</dbReference>
<dbReference type="CDD" id="cd03891">
    <property type="entry name" value="M20_DapE_proteobac"/>
    <property type="match status" value="1"/>
</dbReference>
<dbReference type="Gene3D" id="3.30.70.360">
    <property type="match status" value="1"/>
</dbReference>
<dbReference type="Gene3D" id="3.40.630.10">
    <property type="entry name" value="Zn peptidases"/>
    <property type="match status" value="1"/>
</dbReference>
<dbReference type="HAMAP" id="MF_01690">
    <property type="entry name" value="DapE"/>
    <property type="match status" value="1"/>
</dbReference>
<dbReference type="InterPro" id="IPR001261">
    <property type="entry name" value="ArgE/DapE_CS"/>
</dbReference>
<dbReference type="InterPro" id="IPR036264">
    <property type="entry name" value="Bact_exopeptidase_dim_dom"/>
</dbReference>
<dbReference type="InterPro" id="IPR005941">
    <property type="entry name" value="DapE_proteobac"/>
</dbReference>
<dbReference type="InterPro" id="IPR002933">
    <property type="entry name" value="Peptidase_M20"/>
</dbReference>
<dbReference type="InterPro" id="IPR011650">
    <property type="entry name" value="Peptidase_M20_dimer"/>
</dbReference>
<dbReference type="InterPro" id="IPR050072">
    <property type="entry name" value="Peptidase_M20A"/>
</dbReference>
<dbReference type="NCBIfam" id="TIGR01246">
    <property type="entry name" value="dapE_proteo"/>
    <property type="match status" value="1"/>
</dbReference>
<dbReference type="NCBIfam" id="NF009557">
    <property type="entry name" value="PRK13009.1"/>
    <property type="match status" value="1"/>
</dbReference>
<dbReference type="PANTHER" id="PTHR43808">
    <property type="entry name" value="ACETYLORNITHINE DEACETYLASE"/>
    <property type="match status" value="1"/>
</dbReference>
<dbReference type="PANTHER" id="PTHR43808:SF31">
    <property type="entry name" value="N-ACETYL-L-CITRULLINE DEACETYLASE"/>
    <property type="match status" value="1"/>
</dbReference>
<dbReference type="Pfam" id="PF07687">
    <property type="entry name" value="M20_dimer"/>
    <property type="match status" value="1"/>
</dbReference>
<dbReference type="Pfam" id="PF01546">
    <property type="entry name" value="Peptidase_M20"/>
    <property type="match status" value="1"/>
</dbReference>
<dbReference type="SUPFAM" id="SSF55031">
    <property type="entry name" value="Bacterial exopeptidase dimerisation domain"/>
    <property type="match status" value="1"/>
</dbReference>
<dbReference type="SUPFAM" id="SSF53187">
    <property type="entry name" value="Zn-dependent exopeptidases"/>
    <property type="match status" value="1"/>
</dbReference>
<dbReference type="PROSITE" id="PS00759">
    <property type="entry name" value="ARGE_DAPE_CPG2_2"/>
    <property type="match status" value="1"/>
</dbReference>
<name>DAPE_RICRS</name>
<feature type="chain" id="PRO_0000375706" description="Succinyl-diaminopimelate desuccinylase">
    <location>
        <begin position="1"/>
        <end position="381"/>
    </location>
</feature>
<feature type="active site" evidence="1">
    <location>
        <position position="71"/>
    </location>
</feature>
<feature type="active site" description="Proton acceptor" evidence="1">
    <location>
        <position position="137"/>
    </location>
</feature>
<feature type="binding site" evidence="1">
    <location>
        <position position="69"/>
    </location>
    <ligand>
        <name>Zn(2+)</name>
        <dbReference type="ChEBI" id="CHEBI:29105"/>
        <label>1</label>
    </ligand>
</feature>
<feature type="binding site" evidence="1">
    <location>
        <position position="103"/>
    </location>
    <ligand>
        <name>Zn(2+)</name>
        <dbReference type="ChEBI" id="CHEBI:29105"/>
        <label>1</label>
    </ligand>
</feature>
<feature type="binding site" evidence="1">
    <location>
        <position position="103"/>
    </location>
    <ligand>
        <name>Zn(2+)</name>
        <dbReference type="ChEBI" id="CHEBI:29105"/>
        <label>2</label>
    </ligand>
</feature>
<feature type="binding site" evidence="1">
    <location>
        <position position="138"/>
    </location>
    <ligand>
        <name>Zn(2+)</name>
        <dbReference type="ChEBI" id="CHEBI:29105"/>
        <label>2</label>
    </ligand>
</feature>
<feature type="binding site" evidence="1">
    <location>
        <position position="166"/>
    </location>
    <ligand>
        <name>Zn(2+)</name>
        <dbReference type="ChEBI" id="CHEBI:29105"/>
        <label>1</label>
    </ligand>
</feature>
<feature type="binding site" evidence="1">
    <location>
        <position position="355"/>
    </location>
    <ligand>
        <name>Zn(2+)</name>
        <dbReference type="ChEBI" id="CHEBI:29105"/>
        <label>2</label>
    </ligand>
</feature>
<gene>
    <name evidence="1" type="primary">dapE</name>
    <name type="ordered locus">A1G_07400</name>
</gene>
<protein>
    <recommendedName>
        <fullName evidence="1">Succinyl-diaminopimelate desuccinylase</fullName>
        <shortName evidence="1">SDAP desuccinylase</shortName>
        <ecNumber evidence="1">3.5.1.18</ecNumber>
    </recommendedName>
    <alternativeName>
        <fullName evidence="1">N-succinyl-LL-2,6-diaminoheptanedioate amidohydrolase</fullName>
    </alternativeName>
</protein>
<sequence length="381" mass="42885">MYINYLKDLISFKSVTPKSDGAIEYINDLLKQHGFKTEIKIFGDSKSEQVTNLYAVFGSNEPNICFVGHVDVVLEGNHELWHNASPFKVSQQDGKIYGRGAVDMKGAIACFLAASLDFIKNNTDFKGSISFLLTSDEEGKAKHGTKEMLQYIYDQGYKINFAIVGEPTCEKEIGDAIKIGRRGSVNFKLNIEGLSGHVAYPHKANNPLPCLIIILNELTNIKLDEGTEFFQRSNLEVTNIEVSNNTSNVIPASTEASFNIRFNNLHSAETLAKQVEEIIKQHCKEYKVDYKLEYSSSAESFIQNPSDKIKEFAKVVEHTLKIKPEFSTSGGTSDARFVKNYCPLVEFGLLSETAHKINEYTKISDLQKLYDVYYNFLMEIL</sequence>
<organism>
    <name type="scientific">Rickettsia rickettsii (strain Sheila Smith)</name>
    <dbReference type="NCBI Taxonomy" id="392021"/>
    <lineage>
        <taxon>Bacteria</taxon>
        <taxon>Pseudomonadati</taxon>
        <taxon>Pseudomonadota</taxon>
        <taxon>Alphaproteobacteria</taxon>
        <taxon>Rickettsiales</taxon>
        <taxon>Rickettsiaceae</taxon>
        <taxon>Rickettsieae</taxon>
        <taxon>Rickettsia</taxon>
        <taxon>spotted fever group</taxon>
    </lineage>
</organism>
<proteinExistence type="inferred from homology"/>
<accession>A8GU44</accession>
<reference key="1">
    <citation type="submission" date="2007-09" db="EMBL/GenBank/DDBJ databases">
        <title>Complete genome sequence of Rickettsia rickettsii.</title>
        <authorList>
            <person name="Madan A."/>
            <person name="Fahey J."/>
            <person name="Helton E."/>
            <person name="Ketteman M."/>
            <person name="Madan A."/>
            <person name="Rodrigues S."/>
            <person name="Sanchez A."/>
            <person name="Dasch G."/>
            <person name="Eremeeva M."/>
        </authorList>
    </citation>
    <scope>NUCLEOTIDE SEQUENCE [LARGE SCALE GENOMIC DNA]</scope>
    <source>
        <strain>Sheila Smith</strain>
    </source>
</reference>
<comment type="function">
    <text evidence="1">Catalyzes the hydrolysis of N-succinyl-L,L-diaminopimelic acid (SDAP), forming succinate and LL-2,6-diaminopimelate (DAP), an intermediate involved in the bacterial biosynthesis of lysine and meso-diaminopimelic acid, an essential component of bacterial cell walls.</text>
</comment>
<comment type="catalytic activity">
    <reaction evidence="1">
        <text>N-succinyl-(2S,6S)-2,6-diaminopimelate + H2O = (2S,6S)-2,6-diaminopimelate + succinate</text>
        <dbReference type="Rhea" id="RHEA:22608"/>
        <dbReference type="ChEBI" id="CHEBI:15377"/>
        <dbReference type="ChEBI" id="CHEBI:30031"/>
        <dbReference type="ChEBI" id="CHEBI:57609"/>
        <dbReference type="ChEBI" id="CHEBI:58087"/>
        <dbReference type="EC" id="3.5.1.18"/>
    </reaction>
</comment>
<comment type="cofactor">
    <cofactor evidence="1">
        <name>Zn(2+)</name>
        <dbReference type="ChEBI" id="CHEBI:29105"/>
    </cofactor>
    <cofactor evidence="1">
        <name>Co(2+)</name>
        <dbReference type="ChEBI" id="CHEBI:48828"/>
    </cofactor>
    <text evidence="1">Binds 2 Zn(2+) or Co(2+) ions per subunit.</text>
</comment>
<comment type="pathway">
    <text evidence="1">Amino-acid biosynthesis; L-lysine biosynthesis via DAP pathway; LL-2,6-diaminopimelate from (S)-tetrahydrodipicolinate (succinylase route): step 3/3.</text>
</comment>
<comment type="subunit">
    <text evidence="1">Homodimer.</text>
</comment>
<comment type="similarity">
    <text evidence="1">Belongs to the peptidase M20A family. DapE subfamily.</text>
</comment>
<evidence type="ECO:0000255" key="1">
    <source>
        <dbReference type="HAMAP-Rule" id="MF_01690"/>
    </source>
</evidence>
<keyword id="KW-0028">Amino-acid biosynthesis</keyword>
<keyword id="KW-0170">Cobalt</keyword>
<keyword id="KW-0220">Diaminopimelate biosynthesis</keyword>
<keyword id="KW-0378">Hydrolase</keyword>
<keyword id="KW-0457">Lysine biosynthesis</keyword>
<keyword id="KW-0479">Metal-binding</keyword>
<keyword id="KW-0862">Zinc</keyword>